<comment type="function">
    <text evidence="1">Part of the MsrPQ system that repairs oxidized periplasmic proteins containing methionine sulfoxide residues (Met-O), using respiratory chain electrons. Thus protects these proteins from oxidative-stress damage caused by reactive species of oxygen and chlorine generated by the host defense mechanisms. MsrPQ is essential for the maintenance of envelope integrity under bleach stress, rescuing a wide series of structurally unrelated periplasmic proteins from methionine oxidation, including the primary periplasmic chaperone SurA and the lipoprotein Pal. MsrQ provides electrons for reduction to the reductase catalytic subunit MsrP, using the quinone pool of the respiratory chain.</text>
</comment>
<comment type="cofactor">
    <cofactor evidence="1">
        <name>FMN</name>
        <dbReference type="ChEBI" id="CHEBI:58210"/>
    </cofactor>
    <text evidence="1">Binds 1 FMN per subunit.</text>
</comment>
<comment type="cofactor">
    <cofactor evidence="1">
        <name>heme b</name>
        <dbReference type="ChEBI" id="CHEBI:60344"/>
    </cofactor>
    <text evidence="1">Binds 1 heme b (iron(II)-protoporphyrin IX) group per subunit.</text>
</comment>
<comment type="subunit">
    <text evidence="1">Heterodimer of a catalytic subunit (MsrP) and a heme-binding subunit (MsrQ).</text>
</comment>
<comment type="subcellular location">
    <subcellularLocation>
        <location evidence="1">Cell inner membrane</location>
        <topology evidence="1">Multi-pass membrane protein</topology>
    </subcellularLocation>
</comment>
<comment type="similarity">
    <text evidence="1">Belongs to the MsrQ family.</text>
</comment>
<dbReference type="EMBL" id="CP000946">
    <property type="protein sequence ID" value="ACA77325.1"/>
    <property type="molecule type" value="Genomic_DNA"/>
</dbReference>
<dbReference type="RefSeq" id="WP_001240105.1">
    <property type="nucleotide sequence ID" value="NZ_MTFT01000011.1"/>
</dbReference>
<dbReference type="SMR" id="B1IZU0"/>
<dbReference type="GeneID" id="75205790"/>
<dbReference type="KEGG" id="ecl:EcolC_1673"/>
<dbReference type="HOGENOM" id="CLU_080662_1_0_6"/>
<dbReference type="GO" id="GO:0005886">
    <property type="term" value="C:plasma membrane"/>
    <property type="evidence" value="ECO:0007669"/>
    <property type="project" value="UniProtKB-SubCell"/>
</dbReference>
<dbReference type="GO" id="GO:0009055">
    <property type="term" value="F:electron transfer activity"/>
    <property type="evidence" value="ECO:0007669"/>
    <property type="project" value="UniProtKB-UniRule"/>
</dbReference>
<dbReference type="GO" id="GO:0010181">
    <property type="term" value="F:FMN binding"/>
    <property type="evidence" value="ECO:0007669"/>
    <property type="project" value="UniProtKB-UniRule"/>
</dbReference>
<dbReference type="GO" id="GO:0020037">
    <property type="term" value="F:heme binding"/>
    <property type="evidence" value="ECO:0007669"/>
    <property type="project" value="UniProtKB-UniRule"/>
</dbReference>
<dbReference type="GO" id="GO:0046872">
    <property type="term" value="F:metal ion binding"/>
    <property type="evidence" value="ECO:0007669"/>
    <property type="project" value="UniProtKB-KW"/>
</dbReference>
<dbReference type="GO" id="GO:0016679">
    <property type="term" value="F:oxidoreductase activity, acting on diphenols and related substances as donors"/>
    <property type="evidence" value="ECO:0007669"/>
    <property type="project" value="TreeGrafter"/>
</dbReference>
<dbReference type="GO" id="GO:0030091">
    <property type="term" value="P:protein repair"/>
    <property type="evidence" value="ECO:0007669"/>
    <property type="project" value="UniProtKB-UniRule"/>
</dbReference>
<dbReference type="HAMAP" id="MF_01207">
    <property type="entry name" value="MsrQ"/>
    <property type="match status" value="1"/>
</dbReference>
<dbReference type="InterPro" id="IPR013130">
    <property type="entry name" value="Fe3_Rdtase_TM_dom"/>
</dbReference>
<dbReference type="InterPro" id="IPR022837">
    <property type="entry name" value="MsrQ-like"/>
</dbReference>
<dbReference type="NCBIfam" id="NF003830">
    <property type="entry name" value="PRK05419.1-1"/>
    <property type="match status" value="1"/>
</dbReference>
<dbReference type="NCBIfam" id="NF003831">
    <property type="entry name" value="PRK05419.1-2"/>
    <property type="match status" value="1"/>
</dbReference>
<dbReference type="NCBIfam" id="NF003832">
    <property type="entry name" value="PRK05419.1-4"/>
    <property type="match status" value="1"/>
</dbReference>
<dbReference type="PANTHER" id="PTHR36964">
    <property type="entry name" value="PROTEIN-METHIONINE-SULFOXIDE REDUCTASE HEME-BINDING SUBUNIT MSRQ"/>
    <property type="match status" value="1"/>
</dbReference>
<dbReference type="PANTHER" id="PTHR36964:SF1">
    <property type="entry name" value="PROTEIN-METHIONINE-SULFOXIDE REDUCTASE HEME-BINDING SUBUNIT MSRQ"/>
    <property type="match status" value="1"/>
</dbReference>
<dbReference type="Pfam" id="PF01794">
    <property type="entry name" value="Ferric_reduct"/>
    <property type="match status" value="1"/>
</dbReference>
<accession>B1IZU0</accession>
<name>MSRQ_ECOLC</name>
<gene>
    <name evidence="1" type="primary">msrQ</name>
    <name type="ordered locus">EcolC_1673</name>
</gene>
<reference key="1">
    <citation type="submission" date="2008-02" db="EMBL/GenBank/DDBJ databases">
        <title>Complete sequence of Escherichia coli C str. ATCC 8739.</title>
        <authorList>
            <person name="Copeland A."/>
            <person name="Lucas S."/>
            <person name="Lapidus A."/>
            <person name="Glavina del Rio T."/>
            <person name="Dalin E."/>
            <person name="Tice H."/>
            <person name="Bruce D."/>
            <person name="Goodwin L."/>
            <person name="Pitluck S."/>
            <person name="Kiss H."/>
            <person name="Brettin T."/>
            <person name="Detter J.C."/>
            <person name="Han C."/>
            <person name="Kuske C.R."/>
            <person name="Schmutz J."/>
            <person name="Larimer F."/>
            <person name="Land M."/>
            <person name="Hauser L."/>
            <person name="Kyrpides N."/>
            <person name="Mikhailova N."/>
            <person name="Ingram L."/>
            <person name="Richardson P."/>
        </authorList>
    </citation>
    <scope>NUCLEOTIDE SEQUENCE [LARGE SCALE GENOMIC DNA]</scope>
    <source>
        <strain>ATCC 8739 / DSM 1576 / NBRC 3972 / NCIMB 8545 / WDCM 00012 / Crooks</strain>
    </source>
</reference>
<protein>
    <recommendedName>
        <fullName evidence="1">Protein-methionine-sulfoxide reductase heme-binding subunit MsrQ</fullName>
    </recommendedName>
    <alternativeName>
        <fullName evidence="1">Flavocytochrome MsrQ</fullName>
    </alternativeName>
</protein>
<organism>
    <name type="scientific">Escherichia coli (strain ATCC 8739 / DSM 1576 / NBRC 3972 / NCIMB 8545 / WDCM 00012 / Crooks)</name>
    <dbReference type="NCBI Taxonomy" id="481805"/>
    <lineage>
        <taxon>Bacteria</taxon>
        <taxon>Pseudomonadati</taxon>
        <taxon>Pseudomonadota</taxon>
        <taxon>Gammaproteobacteria</taxon>
        <taxon>Enterobacterales</taxon>
        <taxon>Enterobacteriaceae</taxon>
        <taxon>Escherichia</taxon>
    </lineage>
</organism>
<proteinExistence type="inferred from homology"/>
<feature type="chain" id="PRO_1000085528" description="Protein-methionine-sulfoxide reductase heme-binding subunit MsrQ">
    <location>
        <begin position="1"/>
        <end position="211"/>
    </location>
</feature>
<feature type="transmembrane region" description="Helical" evidence="1">
    <location>
        <begin position="17"/>
        <end position="37"/>
    </location>
</feature>
<feature type="transmembrane region" description="Helical" evidence="1">
    <location>
        <begin position="82"/>
        <end position="102"/>
    </location>
</feature>
<feature type="transmembrane region" description="Helical" evidence="1">
    <location>
        <begin position="116"/>
        <end position="136"/>
    </location>
</feature>
<feature type="transmembrane region" description="Helical" evidence="1">
    <location>
        <begin position="153"/>
        <end position="173"/>
    </location>
</feature>
<evidence type="ECO:0000255" key="1">
    <source>
        <dbReference type="HAMAP-Rule" id="MF_01207"/>
    </source>
</evidence>
<keyword id="KW-0997">Cell inner membrane</keyword>
<keyword id="KW-1003">Cell membrane</keyword>
<keyword id="KW-0249">Electron transport</keyword>
<keyword id="KW-0285">Flavoprotein</keyword>
<keyword id="KW-0288">FMN</keyword>
<keyword id="KW-0349">Heme</keyword>
<keyword id="KW-0408">Iron</keyword>
<keyword id="KW-0472">Membrane</keyword>
<keyword id="KW-0479">Metal-binding</keyword>
<keyword id="KW-0812">Transmembrane</keyword>
<keyword id="KW-1133">Transmembrane helix</keyword>
<keyword id="KW-0813">Transport</keyword>
<sequence length="211" mass="24052">MRLTAKQVTWLKVSLHLAGLLPFLWLVWAINHGGLGADPVKDIQHFTGRTALKFLLATLLITPLARYAKQPLLIRTRRLLGLWCFAWATLHLTSYALLELGVNNLALLGKELITRPYLTLGIISWVILLALAFTSTQAMQRKLGKHWQQLHNFVYLVAILAPIHYLWSVKIISPQPLIYAGLAVLLLALRYKKLRSLFNRLRKQVHNKLSV</sequence>